<dbReference type="EC" id="6.3.5.3" evidence="1"/>
<dbReference type="EMBL" id="J02732">
    <property type="status" value="NOT_ANNOTATED_CDS"/>
    <property type="molecule type" value="Genomic_DNA"/>
</dbReference>
<dbReference type="EMBL" id="AL009126">
    <property type="protein sequence ID" value="CAB12466.1"/>
    <property type="molecule type" value="Genomic_DNA"/>
</dbReference>
<dbReference type="PIR" id="E29326">
    <property type="entry name" value="E29326"/>
</dbReference>
<dbReference type="RefSeq" id="NP_388528.1">
    <property type="nucleotide sequence ID" value="NC_000964.3"/>
</dbReference>
<dbReference type="RefSeq" id="WP_003219409.1">
    <property type="nucleotide sequence ID" value="NZ_OZ025638.1"/>
</dbReference>
<dbReference type="PDB" id="1T4A">
    <property type="method" value="X-ray"/>
    <property type="resolution" value="2.00 A"/>
    <property type="chains" value="A/B=1-84"/>
</dbReference>
<dbReference type="PDB" id="1TWJ">
    <property type="method" value="X-ray"/>
    <property type="resolution" value="2.50 A"/>
    <property type="chains" value="A/B/C/D=1-84"/>
</dbReference>
<dbReference type="PDBsum" id="1T4A"/>
<dbReference type="PDBsum" id="1TWJ"/>
<dbReference type="SMR" id="P12049"/>
<dbReference type="FunCoup" id="P12049">
    <property type="interactions" value="97"/>
</dbReference>
<dbReference type="STRING" id="224308.BSU06460"/>
<dbReference type="PaxDb" id="224308-BSU06460"/>
<dbReference type="EnsemblBacteria" id="CAB12466">
    <property type="protein sequence ID" value="CAB12466"/>
    <property type="gene ID" value="BSU_06460"/>
</dbReference>
<dbReference type="GeneID" id="86874921"/>
<dbReference type="GeneID" id="936041"/>
<dbReference type="KEGG" id="bsu:BSU06460"/>
<dbReference type="PATRIC" id="fig|224308.179.peg.702"/>
<dbReference type="eggNOG" id="COG1828">
    <property type="taxonomic scope" value="Bacteria"/>
</dbReference>
<dbReference type="InParanoid" id="P12049"/>
<dbReference type="OrthoDB" id="9799101at2"/>
<dbReference type="PhylomeDB" id="P12049"/>
<dbReference type="BioCyc" id="BSUB:BSU06460-MONOMER"/>
<dbReference type="BioCyc" id="MetaCyc:BSU06460-MONOMER"/>
<dbReference type="UniPathway" id="UPA00074">
    <property type="reaction ID" value="UER00128"/>
</dbReference>
<dbReference type="EvolutionaryTrace" id="P12049"/>
<dbReference type="Proteomes" id="UP000001570">
    <property type="component" value="Chromosome"/>
</dbReference>
<dbReference type="GO" id="GO:0005737">
    <property type="term" value="C:cytoplasm"/>
    <property type="evidence" value="ECO:0007669"/>
    <property type="project" value="UniProtKB-SubCell"/>
</dbReference>
<dbReference type="GO" id="GO:0005524">
    <property type="term" value="F:ATP binding"/>
    <property type="evidence" value="ECO:0007669"/>
    <property type="project" value="UniProtKB-UniRule"/>
</dbReference>
<dbReference type="GO" id="GO:0004642">
    <property type="term" value="F:phosphoribosylformylglycinamidine synthase activity"/>
    <property type="evidence" value="ECO:0007669"/>
    <property type="project" value="UniProtKB-UniRule"/>
</dbReference>
<dbReference type="GO" id="GO:0006189">
    <property type="term" value="P:'de novo' IMP biosynthetic process"/>
    <property type="evidence" value="ECO:0007669"/>
    <property type="project" value="UniProtKB-UniRule"/>
</dbReference>
<dbReference type="Gene3D" id="3.30.1280.10">
    <property type="entry name" value="Phosphoribosylformylglycinamidine synthase subunit PurS"/>
    <property type="match status" value="1"/>
</dbReference>
<dbReference type="HAMAP" id="MF_01926">
    <property type="entry name" value="PurS"/>
    <property type="match status" value="1"/>
</dbReference>
<dbReference type="InterPro" id="IPR003850">
    <property type="entry name" value="PurS"/>
</dbReference>
<dbReference type="InterPro" id="IPR036604">
    <property type="entry name" value="PurS-like_sf"/>
</dbReference>
<dbReference type="NCBIfam" id="TIGR00302">
    <property type="entry name" value="phosphoribosylformylglycinamidine synthase subunit PurS"/>
    <property type="match status" value="1"/>
</dbReference>
<dbReference type="NCBIfam" id="NF004630">
    <property type="entry name" value="PRK05974.1"/>
    <property type="match status" value="1"/>
</dbReference>
<dbReference type="PANTHER" id="PTHR34696">
    <property type="entry name" value="PHOSPHORIBOSYLFORMYLGLYCINAMIDINE SYNTHASE SUBUNIT PURS"/>
    <property type="match status" value="1"/>
</dbReference>
<dbReference type="PANTHER" id="PTHR34696:SF1">
    <property type="entry name" value="PHOSPHORIBOSYLFORMYLGLYCINAMIDINE SYNTHASE SUBUNIT PURS"/>
    <property type="match status" value="1"/>
</dbReference>
<dbReference type="Pfam" id="PF02700">
    <property type="entry name" value="PurS"/>
    <property type="match status" value="1"/>
</dbReference>
<dbReference type="SUPFAM" id="SSF82697">
    <property type="entry name" value="PurS-like"/>
    <property type="match status" value="1"/>
</dbReference>
<organism>
    <name type="scientific">Bacillus subtilis (strain 168)</name>
    <dbReference type="NCBI Taxonomy" id="224308"/>
    <lineage>
        <taxon>Bacteria</taxon>
        <taxon>Bacillati</taxon>
        <taxon>Bacillota</taxon>
        <taxon>Bacilli</taxon>
        <taxon>Bacillales</taxon>
        <taxon>Bacillaceae</taxon>
        <taxon>Bacillus</taxon>
    </lineage>
</organism>
<sequence>MYKVKVYVSLKESVLDPQGSAVQHALHSMTYNEVQDVRIGKYMELTIEKSDRDLDVLVKEMCEKLLANTVIEDYRYEVEEVVAQ</sequence>
<comment type="function">
    <text evidence="1 2 3">Part of the phosphoribosylformylglycinamidine synthase complex involved in the purines biosynthetic pathway. Catalyzes the ATP-dependent conversion of formylglycinamide ribonucleotide (FGAR) and glutamine to yield formylglycinamidine ribonucleotide (FGAM) and glutamate. The FGAM synthase complex is composed of three subunits. PurQ produces an ammonia molecule by converting glutamine to glutamate. PurL transfers the ammonia molecule to FGAR to form FGAM in an ATP-dependent manner. PurS interacts with PurQ and PurL and is thought to assist in the transfer of the ammonia molecule from PurQ to PurL.</text>
</comment>
<comment type="catalytic activity">
    <reaction evidence="1 3">
        <text>N(2)-formyl-N(1)-(5-phospho-beta-D-ribosyl)glycinamide + L-glutamine + ATP + H2O = 2-formamido-N(1)-(5-O-phospho-beta-D-ribosyl)acetamidine + L-glutamate + ADP + phosphate + H(+)</text>
        <dbReference type="Rhea" id="RHEA:17129"/>
        <dbReference type="ChEBI" id="CHEBI:15377"/>
        <dbReference type="ChEBI" id="CHEBI:15378"/>
        <dbReference type="ChEBI" id="CHEBI:29985"/>
        <dbReference type="ChEBI" id="CHEBI:30616"/>
        <dbReference type="ChEBI" id="CHEBI:43474"/>
        <dbReference type="ChEBI" id="CHEBI:58359"/>
        <dbReference type="ChEBI" id="CHEBI:147286"/>
        <dbReference type="ChEBI" id="CHEBI:147287"/>
        <dbReference type="ChEBI" id="CHEBI:456216"/>
        <dbReference type="EC" id="6.3.5.3"/>
    </reaction>
</comment>
<comment type="biophysicochemical properties">
    <kinetics>
        <KM evidence="3">181 uM for ATP (at pH 7.2 and 37 degrees Celsius)</KM>
        <KM evidence="3">507 uM for FGAR (at pH 7.2 and 37 degrees Celsius)</KM>
        <KM evidence="3">1.3 mM for glutamine (at pH 7.2 and 37 degrees Celsius)</KM>
        <text>kcat is 2.49 sec(-1) for FGAM synthase activity (at pH 7.2 and 37 degrees Celsius).</text>
    </kinetics>
</comment>
<comment type="pathway">
    <text evidence="1">Purine metabolism; IMP biosynthesis via de novo pathway; 5-amino-1-(5-phospho-D-ribosyl)imidazole from N(2)-formyl-N(1)-(5-phospho-D-ribosyl)glycinamide: step 1/2.</text>
</comment>
<comment type="subunit">
    <text evidence="4">Homodimer or homotetramer. Part of the FGAM synthase complex composed of 1 PurL, 1 PurQ and 2 PurS subunits.</text>
</comment>
<comment type="subcellular location">
    <subcellularLocation>
        <location evidence="1">Cytoplasm</location>
    </subcellularLocation>
</comment>
<comment type="disruption phenotype">
    <text evidence="2">Cells lacking this gene show a purine auxotrophic phenotype and an accumulation of FGAR due to defective FGAM synthetase activity.</text>
</comment>
<comment type="similarity">
    <text evidence="1">Belongs to the PurS family.</text>
</comment>
<protein>
    <recommendedName>
        <fullName evidence="1">Phosphoribosylformylglycinamidine synthase subunit PurS</fullName>
        <shortName evidence="1">FGAM synthase</shortName>
        <ecNumber evidence="1">6.3.5.3</ecNumber>
    </recommendedName>
    <alternativeName>
        <fullName evidence="1">Formylglycinamide ribonucleotide amidotransferase subunit III</fullName>
        <shortName evidence="1">FGAR amidotransferase III</shortName>
        <shortName evidence="1">FGAR-AT III</shortName>
    </alternativeName>
    <alternativeName>
        <fullName evidence="1">Phosphoribosylformylglycinamidine synthase subunit III</fullName>
    </alternativeName>
</protein>
<evidence type="ECO:0000255" key="1">
    <source>
        <dbReference type="HAMAP-Rule" id="MF_01926"/>
    </source>
</evidence>
<evidence type="ECO:0000269" key="2">
    <source>
    </source>
</evidence>
<evidence type="ECO:0000269" key="3">
    <source>
    </source>
</evidence>
<evidence type="ECO:0000269" key="4">
    <source>
    </source>
</evidence>
<evidence type="ECO:0007829" key="5">
    <source>
        <dbReference type="PDB" id="1T4A"/>
    </source>
</evidence>
<feature type="chain" id="PRO_0000100395" description="Phosphoribosylformylglycinamidine synthase subunit PurS">
    <location>
        <begin position="1"/>
        <end position="84"/>
    </location>
</feature>
<feature type="strand" evidence="5">
    <location>
        <begin position="2"/>
        <end position="10"/>
    </location>
</feature>
<feature type="helix" evidence="5">
    <location>
        <begin position="17"/>
        <end position="28"/>
    </location>
</feature>
<feature type="strand" evidence="5">
    <location>
        <begin position="34"/>
        <end position="47"/>
    </location>
</feature>
<feature type="helix" evidence="5">
    <location>
        <begin position="54"/>
        <end position="64"/>
    </location>
</feature>
<feature type="turn" evidence="5">
    <location>
        <begin position="69"/>
        <end position="71"/>
    </location>
</feature>
<feature type="strand" evidence="5">
    <location>
        <begin position="72"/>
        <end position="79"/>
    </location>
</feature>
<proteinExistence type="evidence at protein level"/>
<accession>P12049</accession>
<name>PURS_BACSU</name>
<gene>
    <name evidence="1" type="primary">purS</name>
    <name type="synonym">yexA</name>
    <name type="ordered locus">BSU06460</name>
</gene>
<keyword id="KW-0002">3D-structure</keyword>
<keyword id="KW-0067">ATP-binding</keyword>
<keyword id="KW-0963">Cytoplasm</keyword>
<keyword id="KW-0436">Ligase</keyword>
<keyword id="KW-0547">Nucleotide-binding</keyword>
<keyword id="KW-0658">Purine biosynthesis</keyword>
<keyword id="KW-1185">Reference proteome</keyword>
<reference key="1">
    <citation type="journal article" date="1987" name="J. Biol. Chem.">
        <title>Cloning and characterization of a 12-gene cluster from Bacillus subtilis encoding nine enzymes for de novo purine nucleotide synthesis.</title>
        <authorList>
            <person name="Ebbole D.J."/>
            <person name="Zalkin H."/>
        </authorList>
    </citation>
    <scope>NUCLEOTIDE SEQUENCE [GENOMIC DNA]</scope>
</reference>
<reference key="2">
    <citation type="journal article" date="1997" name="Nature">
        <title>The complete genome sequence of the Gram-positive bacterium Bacillus subtilis.</title>
        <authorList>
            <person name="Kunst F."/>
            <person name="Ogasawara N."/>
            <person name="Moszer I."/>
            <person name="Albertini A.M."/>
            <person name="Alloni G."/>
            <person name="Azevedo V."/>
            <person name="Bertero M.G."/>
            <person name="Bessieres P."/>
            <person name="Bolotin A."/>
            <person name="Borchert S."/>
            <person name="Borriss R."/>
            <person name="Boursier L."/>
            <person name="Brans A."/>
            <person name="Braun M."/>
            <person name="Brignell S.C."/>
            <person name="Bron S."/>
            <person name="Brouillet S."/>
            <person name="Bruschi C.V."/>
            <person name="Caldwell B."/>
            <person name="Capuano V."/>
            <person name="Carter N.M."/>
            <person name="Choi S.-K."/>
            <person name="Codani J.-J."/>
            <person name="Connerton I.F."/>
            <person name="Cummings N.J."/>
            <person name="Daniel R.A."/>
            <person name="Denizot F."/>
            <person name="Devine K.M."/>
            <person name="Duesterhoeft A."/>
            <person name="Ehrlich S.D."/>
            <person name="Emmerson P.T."/>
            <person name="Entian K.-D."/>
            <person name="Errington J."/>
            <person name="Fabret C."/>
            <person name="Ferrari E."/>
            <person name="Foulger D."/>
            <person name="Fritz C."/>
            <person name="Fujita M."/>
            <person name="Fujita Y."/>
            <person name="Fuma S."/>
            <person name="Galizzi A."/>
            <person name="Galleron N."/>
            <person name="Ghim S.-Y."/>
            <person name="Glaser P."/>
            <person name="Goffeau A."/>
            <person name="Golightly E.J."/>
            <person name="Grandi G."/>
            <person name="Guiseppi G."/>
            <person name="Guy B.J."/>
            <person name="Haga K."/>
            <person name="Haiech J."/>
            <person name="Harwood C.R."/>
            <person name="Henaut A."/>
            <person name="Hilbert H."/>
            <person name="Holsappel S."/>
            <person name="Hosono S."/>
            <person name="Hullo M.-F."/>
            <person name="Itaya M."/>
            <person name="Jones L.-M."/>
            <person name="Joris B."/>
            <person name="Karamata D."/>
            <person name="Kasahara Y."/>
            <person name="Klaerr-Blanchard M."/>
            <person name="Klein C."/>
            <person name="Kobayashi Y."/>
            <person name="Koetter P."/>
            <person name="Koningstein G."/>
            <person name="Krogh S."/>
            <person name="Kumano M."/>
            <person name="Kurita K."/>
            <person name="Lapidus A."/>
            <person name="Lardinois S."/>
            <person name="Lauber J."/>
            <person name="Lazarevic V."/>
            <person name="Lee S.-M."/>
            <person name="Levine A."/>
            <person name="Liu H."/>
            <person name="Masuda S."/>
            <person name="Mauel C."/>
            <person name="Medigue C."/>
            <person name="Medina N."/>
            <person name="Mellado R.P."/>
            <person name="Mizuno M."/>
            <person name="Moestl D."/>
            <person name="Nakai S."/>
            <person name="Noback M."/>
            <person name="Noone D."/>
            <person name="O'Reilly M."/>
            <person name="Ogawa K."/>
            <person name="Ogiwara A."/>
            <person name="Oudega B."/>
            <person name="Park S.-H."/>
            <person name="Parro V."/>
            <person name="Pohl T.M."/>
            <person name="Portetelle D."/>
            <person name="Porwollik S."/>
            <person name="Prescott A.M."/>
            <person name="Presecan E."/>
            <person name="Pujic P."/>
            <person name="Purnelle B."/>
            <person name="Rapoport G."/>
            <person name="Rey M."/>
            <person name="Reynolds S."/>
            <person name="Rieger M."/>
            <person name="Rivolta C."/>
            <person name="Rocha E."/>
            <person name="Roche B."/>
            <person name="Rose M."/>
            <person name="Sadaie Y."/>
            <person name="Sato T."/>
            <person name="Scanlan E."/>
            <person name="Schleich S."/>
            <person name="Schroeter R."/>
            <person name="Scoffone F."/>
            <person name="Sekiguchi J."/>
            <person name="Sekowska A."/>
            <person name="Seror S.J."/>
            <person name="Serror P."/>
            <person name="Shin B.-S."/>
            <person name="Soldo B."/>
            <person name="Sorokin A."/>
            <person name="Tacconi E."/>
            <person name="Takagi T."/>
            <person name="Takahashi H."/>
            <person name="Takemaru K."/>
            <person name="Takeuchi M."/>
            <person name="Tamakoshi A."/>
            <person name="Tanaka T."/>
            <person name="Terpstra P."/>
            <person name="Tognoni A."/>
            <person name="Tosato V."/>
            <person name="Uchiyama S."/>
            <person name="Vandenbol M."/>
            <person name="Vannier F."/>
            <person name="Vassarotti A."/>
            <person name="Viari A."/>
            <person name="Wambutt R."/>
            <person name="Wedler E."/>
            <person name="Wedler H."/>
            <person name="Weitzenegger T."/>
            <person name="Winters P."/>
            <person name="Wipat A."/>
            <person name="Yamamoto H."/>
            <person name="Yamane K."/>
            <person name="Yasumoto K."/>
            <person name="Yata K."/>
            <person name="Yoshida K."/>
            <person name="Yoshikawa H.-F."/>
            <person name="Zumstein E."/>
            <person name="Yoshikawa H."/>
            <person name="Danchin A."/>
        </authorList>
    </citation>
    <scope>NUCLEOTIDE SEQUENCE [LARGE SCALE GENOMIC DNA]</scope>
    <source>
        <strain>168</strain>
    </source>
</reference>
<reference key="3">
    <citation type="journal article" date="2000" name="Microbiology">
        <title>The yexA gene product is required for phosphoribosylformylglycinamidine synthetase activity in Bacillus subtilis.</title>
        <authorList>
            <person name="Saxild H.H."/>
            <person name="Nygaard P."/>
        </authorList>
    </citation>
    <scope>FUNCTION</scope>
    <scope>DISRUPTION PHENOTYPE</scope>
    <scope>NOMENCLATURE</scope>
</reference>
<reference key="4">
    <citation type="journal article" date="2004" name="Biochemistry">
        <title>The formylglycinamide ribonucleotide amidotransferase complex from Bacillus subtilis: metabolite-mediated complex formation.</title>
        <authorList>
            <person name="Hoskins A.A."/>
            <person name="Anand R."/>
            <person name="Ealick S.E."/>
            <person name="Stubbe J."/>
        </authorList>
    </citation>
    <scope>FUNCTION</scope>
    <scope>CATALYTIC ACTIVITY</scope>
    <scope>BIOPHYSICOCHEMICAL PROPERTIES</scope>
    <scope>MASS SPECTROMETRY</scope>
</reference>
<reference key="5">
    <citation type="journal article" date="2004" name="Biochemistry">
        <title>A model for the Bacillus subtilis formylglycinamide ribonucleotide amidotransferase multiprotein complex.</title>
        <authorList>
            <person name="Anand R."/>
            <person name="Hoskins A.A."/>
            <person name="Bennett E.M."/>
            <person name="Sintchak M.D."/>
            <person name="Stubbe J."/>
            <person name="Ealick S.E."/>
        </authorList>
    </citation>
    <scope>X-RAY CRYSTALLOGRAPHY (2.0 ANGSTROMS)</scope>
    <scope>SUBUNIT</scope>
</reference>